<comment type="function">
    <text evidence="1">Component of the ERMES/MDM complex, which serves as a molecular tether to connect the endoplasmic reticulum and mitochondria. Components of this complex are involved in the control of mitochondrial shape and protein biogenesis and may function in phospholipid exchange. MDM10 is involved in the late assembly steps of the general translocase of the mitochondrial outer membrane (TOM complex). Functions in the TOM40-specific route of the assembly of outer membrane beta-barrel proteins, including the association of TOM40 with the receptor TOM22 and small TOM proteins. Can associate with the SAM(core) complex as well as the MDM12-MMM1 complex, both involved in late steps of the major beta-barrel assembly pathway, that is responsible for biogenesis of all outer membrane beta-barrel proteins. May act as a switch that shuttles between both complexes and channels precursor proteins into the TOM40-specific pathway. Plays a role in mitochondrial morphology and in the inheritance of mitochondria.</text>
</comment>
<comment type="subunit">
    <text evidence="1">Component of the ER-mitochondria encounter structure (ERMES) or MDM complex, composed of MMM1, MDM10, MDM12 and MDM34. Associates with the mitochondrial outer membrane sorting assembly machinery SAM(core) complex.</text>
</comment>
<comment type="subcellular location">
    <subcellularLocation>
        <location evidence="1">Mitochondrion outer membrane</location>
        <topology evidence="1">Multi-pass membrane protein</topology>
    </subcellularLocation>
    <text evidence="1">The ERMES/MDM complex localizes to a few discrete foci (around 10 per single cell), that represent mitochondria-endoplasmic reticulum junctions. These foci are often found next to mtDNA nucleoids.</text>
</comment>
<comment type="domain">
    <text>Lacks alpha-helical transmembrane segments, suggesting that it resides in the membrane via beta-sheet conformations similar to those predicted for other outer membrane proteins and porin.</text>
</comment>
<comment type="similarity">
    <text evidence="1">Belongs to the MDM10 family.</text>
</comment>
<organism>
    <name type="scientific">Ajellomyces dermatitidis (strain ER-3 / ATCC MYA-2586)</name>
    <name type="common">Blastomyces dermatitidis</name>
    <dbReference type="NCBI Taxonomy" id="559297"/>
    <lineage>
        <taxon>Eukaryota</taxon>
        <taxon>Fungi</taxon>
        <taxon>Dikarya</taxon>
        <taxon>Ascomycota</taxon>
        <taxon>Pezizomycotina</taxon>
        <taxon>Eurotiomycetes</taxon>
        <taxon>Eurotiomycetidae</taxon>
        <taxon>Onygenales</taxon>
        <taxon>Ajellomycetaceae</taxon>
        <taxon>Blastomyces</taxon>
    </lineage>
</organism>
<feature type="chain" id="PRO_0000384158" description="Mitochondrial distribution and morphology protein 10">
    <location>
        <begin position="1"/>
        <end position="468"/>
    </location>
</feature>
<feature type="region of interest" description="Disordered" evidence="2">
    <location>
        <begin position="370"/>
        <end position="394"/>
    </location>
</feature>
<feature type="compositionally biased region" description="Basic and acidic residues" evidence="2">
    <location>
        <begin position="370"/>
        <end position="386"/>
    </location>
</feature>
<proteinExistence type="inferred from homology"/>
<gene>
    <name evidence="1" type="primary">MDM10</name>
    <name type="ORF">BDCG_05066</name>
</gene>
<name>MDM10_AJEDR</name>
<evidence type="ECO:0000255" key="1">
    <source>
        <dbReference type="HAMAP-Rule" id="MF_03102"/>
    </source>
</evidence>
<evidence type="ECO:0000256" key="2">
    <source>
        <dbReference type="SAM" id="MobiDB-lite"/>
    </source>
</evidence>
<sequence length="468" mass="50929">MRDFMDYIQLAFYDASKWNRDNSYSQLTTTANALLDFSTPERLKVNLSSLSTPHFATTYTLGTVGLIDGSISYLFTTIPLHDTPSRSTLIPLRKLVPGYRQIYPPSLPPAFPAADGRDGDLAIGGTEGDLKKKATLLHATLHLPPPTTLTGSFLRRLSPTTQLSLAFCSSRAPASKSAPQATLVTQILYDTGKYNSEFLFSTDNALFGFKGLWNFGPDPRKQNQNGGDPAREPCRSLLSLLSAGGEVYYSPVSSVVGLSTGLRFTTLPAATENPHSTFPYTLTLTLTPLTGSMSTTYSLLASPNLAFSSRFGFNVYSWESEMVAGCELWRRSKKLHTLQRNSSPLFAVDDLTWARRKMGLQDAAVSVHPERDGLPGIQRDDHDMHHHPQRPHASDSVIKVRVDQSWNIRALWEGRVKELVVSAGIALGPKSRSSLSYASSLAASGPGAAGGLSSYGWKSVGVSVLYSS</sequence>
<dbReference type="EMBL" id="EQ999977">
    <property type="protein sequence ID" value="EEQ89946.2"/>
    <property type="molecule type" value="Genomic_DNA"/>
</dbReference>
<dbReference type="SMR" id="C5GL32"/>
<dbReference type="STRING" id="559297.C5GL32"/>
<dbReference type="eggNOG" id="ENOG502QUN5">
    <property type="taxonomic scope" value="Eukaryota"/>
</dbReference>
<dbReference type="HOGENOM" id="CLU_026505_1_0_1"/>
<dbReference type="OMA" id="VPGYRQI"/>
<dbReference type="GO" id="GO:0032865">
    <property type="term" value="C:ERMES complex"/>
    <property type="evidence" value="ECO:0007669"/>
    <property type="project" value="UniProtKB-UniRule"/>
</dbReference>
<dbReference type="GO" id="GO:0001401">
    <property type="term" value="C:SAM complex"/>
    <property type="evidence" value="ECO:0007669"/>
    <property type="project" value="TreeGrafter"/>
</dbReference>
<dbReference type="GO" id="GO:0051654">
    <property type="term" value="P:establishment of mitochondrion localization"/>
    <property type="evidence" value="ECO:0007669"/>
    <property type="project" value="TreeGrafter"/>
</dbReference>
<dbReference type="GO" id="GO:0000002">
    <property type="term" value="P:mitochondrial genome maintenance"/>
    <property type="evidence" value="ECO:0007669"/>
    <property type="project" value="UniProtKB-UniRule"/>
</dbReference>
<dbReference type="GO" id="GO:0070096">
    <property type="term" value="P:mitochondrial outer membrane translocase complex assembly"/>
    <property type="evidence" value="ECO:0007669"/>
    <property type="project" value="UniProtKB-UniRule"/>
</dbReference>
<dbReference type="GO" id="GO:1990456">
    <property type="term" value="P:mitochondrion-endoplasmic reticulum membrane tethering"/>
    <property type="evidence" value="ECO:0007669"/>
    <property type="project" value="UniProtKB-UniRule"/>
</dbReference>
<dbReference type="GO" id="GO:0015914">
    <property type="term" value="P:phospholipid transport"/>
    <property type="evidence" value="ECO:0007669"/>
    <property type="project" value="TreeGrafter"/>
</dbReference>
<dbReference type="GO" id="GO:0045040">
    <property type="term" value="P:protein insertion into mitochondrial outer membrane"/>
    <property type="evidence" value="ECO:0007669"/>
    <property type="project" value="UniProtKB-UniRule"/>
</dbReference>
<dbReference type="HAMAP" id="MF_03102">
    <property type="entry name" value="Mdm10"/>
    <property type="match status" value="1"/>
</dbReference>
<dbReference type="InterPro" id="IPR027539">
    <property type="entry name" value="Mdm10"/>
</dbReference>
<dbReference type="PANTHER" id="PTHR28035">
    <property type="entry name" value="MITOCHONDRIAL DISTRIBUTION AND MORPHOLOGY PROTEIN 10"/>
    <property type="match status" value="1"/>
</dbReference>
<dbReference type="PANTHER" id="PTHR28035:SF1">
    <property type="entry name" value="MITOCHONDRIAL DISTRIBUTION AND MORPHOLOGY PROTEIN 10"/>
    <property type="match status" value="1"/>
</dbReference>
<dbReference type="Pfam" id="PF12519">
    <property type="entry name" value="MDM10"/>
    <property type="match status" value="1"/>
</dbReference>
<reference key="1">
    <citation type="journal article" date="2015" name="PLoS Genet.">
        <title>The dynamic genome and transcriptome of the human fungal pathogen Blastomyces and close relative Emmonsia.</title>
        <authorList>
            <person name="Munoz J.F."/>
            <person name="Gauthier G.M."/>
            <person name="Desjardins C.A."/>
            <person name="Gallo J.E."/>
            <person name="Holder J."/>
            <person name="Sullivan T.D."/>
            <person name="Marty A.J."/>
            <person name="Carmen J.C."/>
            <person name="Chen Z."/>
            <person name="Ding L."/>
            <person name="Gujja S."/>
            <person name="Magrini V."/>
            <person name="Misas E."/>
            <person name="Mitreva M."/>
            <person name="Priest M."/>
            <person name="Saif S."/>
            <person name="Whiston E.A."/>
            <person name="Young S."/>
            <person name="Zeng Q."/>
            <person name="Goldman W.E."/>
            <person name="Mardis E.R."/>
            <person name="Taylor J.W."/>
            <person name="McEwen J.G."/>
            <person name="Clay O.K."/>
            <person name="Klein B.S."/>
            <person name="Cuomo C.A."/>
        </authorList>
    </citation>
    <scope>NUCLEOTIDE SEQUENCE [LARGE SCALE GENOMIC DNA]</scope>
    <source>
        <strain>ER-3 / ATCC MYA-2586</strain>
    </source>
</reference>
<protein>
    <recommendedName>
        <fullName evidence="1">Mitochondrial distribution and morphology protein 10</fullName>
    </recommendedName>
    <alternativeName>
        <fullName evidence="1">Mitochondrial inheritance component MDM10</fullName>
    </alternativeName>
</protein>
<accession>C5GL32</accession>
<keyword id="KW-0472">Membrane</keyword>
<keyword id="KW-0496">Mitochondrion</keyword>
<keyword id="KW-1000">Mitochondrion outer membrane</keyword>
<keyword id="KW-0812">Transmembrane</keyword>
<keyword id="KW-1134">Transmembrane beta strand</keyword>